<feature type="chain" id="PRO_0000140199" description="GMP synthase [glutamine-hydrolyzing]">
    <location>
        <begin position="1"/>
        <end position="512"/>
    </location>
</feature>
<feature type="domain" description="Glutamine amidotransferase type-1" evidence="1">
    <location>
        <begin position="7"/>
        <end position="197"/>
    </location>
</feature>
<feature type="domain" description="GMPS ATP-PPase" evidence="1">
    <location>
        <begin position="198"/>
        <end position="387"/>
    </location>
</feature>
<feature type="active site" description="Nucleophile" evidence="1">
    <location>
        <position position="84"/>
    </location>
</feature>
<feature type="active site" evidence="1">
    <location>
        <position position="171"/>
    </location>
</feature>
<feature type="active site" evidence="1">
    <location>
        <position position="173"/>
    </location>
</feature>
<feature type="binding site" evidence="1">
    <location>
        <begin position="225"/>
        <end position="231"/>
    </location>
    <ligand>
        <name>ATP</name>
        <dbReference type="ChEBI" id="CHEBI:30616"/>
    </ligand>
</feature>
<comment type="function">
    <text evidence="1">Catalyzes the synthesis of GMP from XMP.</text>
</comment>
<comment type="catalytic activity">
    <reaction evidence="1">
        <text>XMP + L-glutamine + ATP + H2O = GMP + L-glutamate + AMP + diphosphate + 2 H(+)</text>
        <dbReference type="Rhea" id="RHEA:11680"/>
        <dbReference type="ChEBI" id="CHEBI:15377"/>
        <dbReference type="ChEBI" id="CHEBI:15378"/>
        <dbReference type="ChEBI" id="CHEBI:29985"/>
        <dbReference type="ChEBI" id="CHEBI:30616"/>
        <dbReference type="ChEBI" id="CHEBI:33019"/>
        <dbReference type="ChEBI" id="CHEBI:57464"/>
        <dbReference type="ChEBI" id="CHEBI:58115"/>
        <dbReference type="ChEBI" id="CHEBI:58359"/>
        <dbReference type="ChEBI" id="CHEBI:456215"/>
        <dbReference type="EC" id="6.3.5.2"/>
    </reaction>
</comment>
<comment type="pathway">
    <text evidence="1">Purine metabolism; GMP biosynthesis; GMP from XMP (L-Gln route): step 1/1.</text>
</comment>
<comment type="subunit">
    <text evidence="1">Homodimer.</text>
</comment>
<gene>
    <name evidence="1" type="primary">guaA</name>
    <name type="ordered locus">TTE0583</name>
</gene>
<accession>Q8RC63</accession>
<organism>
    <name type="scientific">Caldanaerobacter subterraneus subsp. tengcongensis (strain DSM 15242 / JCM 11007 / NBRC 100824 / MB4)</name>
    <name type="common">Thermoanaerobacter tengcongensis</name>
    <dbReference type="NCBI Taxonomy" id="273068"/>
    <lineage>
        <taxon>Bacteria</taxon>
        <taxon>Bacillati</taxon>
        <taxon>Bacillota</taxon>
        <taxon>Clostridia</taxon>
        <taxon>Thermoanaerobacterales</taxon>
        <taxon>Thermoanaerobacteraceae</taxon>
        <taxon>Caldanaerobacter</taxon>
    </lineage>
</organism>
<reference key="1">
    <citation type="journal article" date="2002" name="Genome Res.">
        <title>A complete sequence of the T. tengcongensis genome.</title>
        <authorList>
            <person name="Bao Q."/>
            <person name="Tian Y."/>
            <person name="Li W."/>
            <person name="Xu Z."/>
            <person name="Xuan Z."/>
            <person name="Hu S."/>
            <person name="Dong W."/>
            <person name="Yang J."/>
            <person name="Chen Y."/>
            <person name="Xue Y."/>
            <person name="Xu Y."/>
            <person name="Lai X."/>
            <person name="Huang L."/>
            <person name="Dong X."/>
            <person name="Ma Y."/>
            <person name="Ling L."/>
            <person name="Tan H."/>
            <person name="Chen R."/>
            <person name="Wang J."/>
            <person name="Yu J."/>
            <person name="Yang H."/>
        </authorList>
    </citation>
    <scope>NUCLEOTIDE SEQUENCE [LARGE SCALE GENOMIC DNA]</scope>
    <source>
        <strain>DSM 15242 / JCM 11007 / NBRC 100824 / MB4</strain>
    </source>
</reference>
<evidence type="ECO:0000255" key="1">
    <source>
        <dbReference type="HAMAP-Rule" id="MF_00344"/>
    </source>
</evidence>
<name>GUAA_CALS4</name>
<sequence>MGIKRETILILDFGGQYTQLIARRIREANVYCEIVPYDISPEEIKKIDPKGIVLSGGPASVYVKNAPKCDKEIFELGYPVLGICYGVQLMTELLGGKVAPAPVREYGKTEVVINNTIPLFKGIERDTIVWMSHTDQIELPPPDFKVVASTENCPIAAIANVEKKLYGVQFHPEVSHTHRGTEIIRNFLFEVCDCSADWTMDSLIEQTVKEVRAKVGNHKAVCALSGGVDSAVAAVLVDRAIHDQLVCIFVDTGLLRTNEGDMVIETFRKNYDMNIIRVDAKDRFLSRLKGVTDPEEKRKIIGNVFIEVFKEEAMKIGDVKFLVQGTLYPDVIESGHGISSTIKSHHNVGGLPEDIGFELIEPLRMLFKDEVRQVGKELGIPDEILYRQPFPGPGLAVRIVGEVTEEKLEILRLADSIVQREMKRFGWYNKVWQSFAILPGIKSVGVMGDERTYGYAIILRVVDSMDGMTADWTKLPYEILESISTSITNEVPGVNRVLYDITSKPPATIEWE</sequence>
<keyword id="KW-0067">ATP-binding</keyword>
<keyword id="KW-0315">Glutamine amidotransferase</keyword>
<keyword id="KW-0332">GMP biosynthesis</keyword>
<keyword id="KW-0436">Ligase</keyword>
<keyword id="KW-0547">Nucleotide-binding</keyword>
<keyword id="KW-0658">Purine biosynthesis</keyword>
<keyword id="KW-1185">Reference proteome</keyword>
<proteinExistence type="inferred from homology"/>
<protein>
    <recommendedName>
        <fullName evidence="1">GMP synthase [glutamine-hydrolyzing]</fullName>
        <ecNumber evidence="1">6.3.5.2</ecNumber>
    </recommendedName>
    <alternativeName>
        <fullName evidence="1">GMP synthetase</fullName>
    </alternativeName>
    <alternativeName>
        <fullName evidence="1">Glutamine amidotransferase</fullName>
    </alternativeName>
</protein>
<dbReference type="EC" id="6.3.5.2" evidence="1"/>
<dbReference type="EMBL" id="AE008691">
    <property type="protein sequence ID" value="AAM23854.1"/>
    <property type="molecule type" value="Genomic_DNA"/>
</dbReference>
<dbReference type="RefSeq" id="WP_011024999.1">
    <property type="nucleotide sequence ID" value="NC_003869.1"/>
</dbReference>
<dbReference type="SMR" id="Q8RC63"/>
<dbReference type="STRING" id="273068.TTE0583"/>
<dbReference type="MEROPS" id="C26.957"/>
<dbReference type="KEGG" id="tte:TTE0583"/>
<dbReference type="eggNOG" id="COG0518">
    <property type="taxonomic scope" value="Bacteria"/>
</dbReference>
<dbReference type="eggNOG" id="COG0519">
    <property type="taxonomic scope" value="Bacteria"/>
</dbReference>
<dbReference type="HOGENOM" id="CLU_014340_0_5_9"/>
<dbReference type="OrthoDB" id="9802219at2"/>
<dbReference type="UniPathway" id="UPA00189">
    <property type="reaction ID" value="UER00296"/>
</dbReference>
<dbReference type="Proteomes" id="UP000000555">
    <property type="component" value="Chromosome"/>
</dbReference>
<dbReference type="GO" id="GO:0005829">
    <property type="term" value="C:cytosol"/>
    <property type="evidence" value="ECO:0007669"/>
    <property type="project" value="TreeGrafter"/>
</dbReference>
<dbReference type="GO" id="GO:0005524">
    <property type="term" value="F:ATP binding"/>
    <property type="evidence" value="ECO:0007669"/>
    <property type="project" value="UniProtKB-UniRule"/>
</dbReference>
<dbReference type="GO" id="GO:0003921">
    <property type="term" value="F:GMP synthase activity"/>
    <property type="evidence" value="ECO:0007669"/>
    <property type="project" value="InterPro"/>
</dbReference>
<dbReference type="CDD" id="cd01742">
    <property type="entry name" value="GATase1_GMP_Synthase"/>
    <property type="match status" value="1"/>
</dbReference>
<dbReference type="CDD" id="cd01997">
    <property type="entry name" value="GMP_synthase_C"/>
    <property type="match status" value="1"/>
</dbReference>
<dbReference type="FunFam" id="3.30.300.10:FF:000002">
    <property type="entry name" value="GMP synthase [glutamine-hydrolyzing]"/>
    <property type="match status" value="1"/>
</dbReference>
<dbReference type="FunFam" id="3.40.50.620:FF:000001">
    <property type="entry name" value="GMP synthase [glutamine-hydrolyzing]"/>
    <property type="match status" value="1"/>
</dbReference>
<dbReference type="FunFam" id="3.40.50.880:FF:000001">
    <property type="entry name" value="GMP synthase [glutamine-hydrolyzing]"/>
    <property type="match status" value="1"/>
</dbReference>
<dbReference type="Gene3D" id="3.30.300.10">
    <property type="match status" value="1"/>
</dbReference>
<dbReference type="Gene3D" id="3.40.50.880">
    <property type="match status" value="1"/>
</dbReference>
<dbReference type="Gene3D" id="3.40.50.620">
    <property type="entry name" value="HUPs"/>
    <property type="match status" value="1"/>
</dbReference>
<dbReference type="HAMAP" id="MF_00344">
    <property type="entry name" value="GMP_synthase"/>
    <property type="match status" value="1"/>
</dbReference>
<dbReference type="InterPro" id="IPR029062">
    <property type="entry name" value="Class_I_gatase-like"/>
</dbReference>
<dbReference type="InterPro" id="IPR017926">
    <property type="entry name" value="GATASE"/>
</dbReference>
<dbReference type="InterPro" id="IPR001674">
    <property type="entry name" value="GMP_synth_C"/>
</dbReference>
<dbReference type="InterPro" id="IPR004739">
    <property type="entry name" value="GMP_synth_GATase"/>
</dbReference>
<dbReference type="InterPro" id="IPR022955">
    <property type="entry name" value="GMP_synthase"/>
</dbReference>
<dbReference type="InterPro" id="IPR025777">
    <property type="entry name" value="GMPS_ATP_PPase_dom"/>
</dbReference>
<dbReference type="InterPro" id="IPR022310">
    <property type="entry name" value="NAD/GMP_synthase"/>
</dbReference>
<dbReference type="InterPro" id="IPR014729">
    <property type="entry name" value="Rossmann-like_a/b/a_fold"/>
</dbReference>
<dbReference type="NCBIfam" id="TIGR00884">
    <property type="entry name" value="guaA_Cterm"/>
    <property type="match status" value="1"/>
</dbReference>
<dbReference type="NCBIfam" id="TIGR00888">
    <property type="entry name" value="guaA_Nterm"/>
    <property type="match status" value="1"/>
</dbReference>
<dbReference type="NCBIfam" id="NF000848">
    <property type="entry name" value="PRK00074.1"/>
    <property type="match status" value="1"/>
</dbReference>
<dbReference type="PANTHER" id="PTHR11922:SF2">
    <property type="entry name" value="GMP SYNTHASE [GLUTAMINE-HYDROLYZING]"/>
    <property type="match status" value="1"/>
</dbReference>
<dbReference type="PANTHER" id="PTHR11922">
    <property type="entry name" value="GMP SYNTHASE-RELATED"/>
    <property type="match status" value="1"/>
</dbReference>
<dbReference type="Pfam" id="PF00117">
    <property type="entry name" value="GATase"/>
    <property type="match status" value="1"/>
</dbReference>
<dbReference type="Pfam" id="PF00958">
    <property type="entry name" value="GMP_synt_C"/>
    <property type="match status" value="1"/>
</dbReference>
<dbReference type="Pfam" id="PF02540">
    <property type="entry name" value="NAD_synthase"/>
    <property type="match status" value="1"/>
</dbReference>
<dbReference type="PRINTS" id="PR00097">
    <property type="entry name" value="ANTSNTHASEII"/>
</dbReference>
<dbReference type="PRINTS" id="PR00096">
    <property type="entry name" value="GATASE"/>
</dbReference>
<dbReference type="SUPFAM" id="SSF52402">
    <property type="entry name" value="Adenine nucleotide alpha hydrolases-like"/>
    <property type="match status" value="1"/>
</dbReference>
<dbReference type="SUPFAM" id="SSF52317">
    <property type="entry name" value="Class I glutamine amidotransferase-like"/>
    <property type="match status" value="1"/>
</dbReference>
<dbReference type="SUPFAM" id="SSF54810">
    <property type="entry name" value="GMP synthetase C-terminal dimerisation domain"/>
    <property type="match status" value="1"/>
</dbReference>
<dbReference type="PROSITE" id="PS51273">
    <property type="entry name" value="GATASE_TYPE_1"/>
    <property type="match status" value="1"/>
</dbReference>
<dbReference type="PROSITE" id="PS51553">
    <property type="entry name" value="GMPS_ATP_PPASE"/>
    <property type="match status" value="1"/>
</dbReference>